<sequence>MNPNQKIITIGSVSLTIATVCFLMQIAILATTVTLHFKQNECNPPANNQVVPCEPIIIERNITEIVYLNNITIEKEVCPEVAEYRNWSKPQCQITGFAPFSKDNSVRLSAGGDIWVTREPYVSCDPGKCYQFALGQGTTLDNKHSNGTIHDRIPHRTLLMNELGVPFHLGTKQVCIAWSSSSCHDGKAWLHVCVTGDDRNATASFIYDGMLVDSIGSWSQNILRTQESECVCINGTCTVVMTDGSASGNADTRVLFIREGKIIHISPLSGSAQHIEECSCYPRYPDVRCVCRDNWKGSNRPVIDIKMADYSINSGYVCSGLVGDTPRSDDSSSNSNCRDPNNERGNPGVKGWAFDNGDDVWMGRTISKDSRSGYETFRVIGGWTTPNSKSQVNRQVIVDSNNWSGYSGIFSVEGKSCINRCFYVELIRGRPQETRVWWTSNSIVVFCGTSGTYGTGSWPDGANINFMPI</sequence>
<proteinExistence type="inferred from homology"/>
<organism>
    <name type="scientific">Influenza A virus (strain A/Turkey/Wisconsin/1/1966 H9N2)</name>
    <dbReference type="NCBI Taxonomy" id="385620"/>
    <lineage>
        <taxon>Viruses</taxon>
        <taxon>Riboviria</taxon>
        <taxon>Orthornavirae</taxon>
        <taxon>Negarnaviricota</taxon>
        <taxon>Polyploviricotina</taxon>
        <taxon>Insthoviricetes</taxon>
        <taxon>Articulavirales</taxon>
        <taxon>Orthomyxoviridae</taxon>
        <taxon>Alphainfluenzavirus</taxon>
        <taxon>Alphainfluenzavirus influenzae</taxon>
        <taxon>Influenza A virus</taxon>
    </lineage>
</organism>
<keyword id="KW-0106">Calcium</keyword>
<keyword id="KW-1015">Disulfide bond</keyword>
<keyword id="KW-0325">Glycoprotein</keyword>
<keyword id="KW-0326">Glycosidase</keyword>
<keyword id="KW-1032">Host cell membrane</keyword>
<keyword id="KW-1043">Host membrane</keyword>
<keyword id="KW-0378">Hydrolase</keyword>
<keyword id="KW-0472">Membrane</keyword>
<keyword id="KW-0479">Metal-binding</keyword>
<keyword id="KW-0735">Signal-anchor</keyword>
<keyword id="KW-0812">Transmembrane</keyword>
<keyword id="KW-1133">Transmembrane helix</keyword>
<keyword id="KW-0946">Virion</keyword>
<accession>Q0A456</accession>
<accession>Q3SBF3</accession>
<gene>
    <name evidence="1" type="primary">NA</name>
</gene>
<protein>
    <recommendedName>
        <fullName evidence="1">Neuraminidase</fullName>
        <ecNumber evidence="1">3.2.1.18</ecNumber>
    </recommendedName>
</protein>
<reference key="1">
    <citation type="submission" date="2003-06" db="EMBL/GenBank/DDBJ databases">
        <title>Characterization of avian influenza viruses isolated from wild birds and sentinel ducks during the winter seasons 2000-2001 and 2001-2002 in France.</title>
        <authorList>
            <person name="Rousset J.A.F."/>
            <person name="Louboutin K."/>
            <person name="Beven V."/>
            <person name="de Boisseson C."/>
            <person name="Bureau E."/>
            <person name="Hars J."/>
            <person name="Jestin V."/>
        </authorList>
    </citation>
    <scope>NUCLEOTIDE SEQUENCE [GENOMIC RNA]</scope>
</reference>
<reference key="2">
    <citation type="journal article" date="2005" name="Virology">
        <title>Evolution of H9N2 influenza viruses from domestic poultry in Mainland China.</title>
        <authorList>
            <person name="Li C."/>
            <person name="Yu K."/>
            <person name="Tian G."/>
            <person name="Yu D."/>
            <person name="Liu L."/>
            <person name="Jing B."/>
            <person name="Ping J."/>
            <person name="Chen H."/>
        </authorList>
    </citation>
    <scope>NUCLEOTIDE SEQUENCE [GENOMIC RNA]</scope>
</reference>
<reference key="3">
    <citation type="journal article" date="2006" name="Science">
        <title>Large-scale sequence analysis of avian influenza isolates.</title>
        <authorList>
            <person name="Obenauer J.C."/>
            <person name="Denson J."/>
            <person name="Mehta P.K."/>
            <person name="Su X."/>
            <person name="Mukatira S."/>
            <person name="Finkelstein D.B."/>
            <person name="Xu X."/>
            <person name="Wang J."/>
            <person name="Ma J."/>
            <person name="Fan Y."/>
            <person name="Rakestraw K.M."/>
            <person name="Webster R.G."/>
            <person name="Hoffmann E."/>
            <person name="Krauss S."/>
            <person name="Zheng J."/>
            <person name="Zhang Z."/>
            <person name="Naeve C.W."/>
        </authorList>
    </citation>
    <scope>NUCLEOTIDE SEQUENCE [GENOMIC RNA]</scope>
</reference>
<reference key="4">
    <citation type="journal article" date="2004" name="Virus Res.">
        <title>Assembly and budding of influenza virus.</title>
        <authorList>
            <person name="Nayak D.P."/>
            <person name="Hui E.K."/>
            <person name="Barman S."/>
        </authorList>
    </citation>
    <scope>REVIEW</scope>
</reference>
<reference key="5">
    <citation type="journal article" date="2005" name="N. Engl. J. Med.">
        <title>Neuraminidase inhibitors for influenza.</title>
        <authorList>
            <person name="Moscona A."/>
        </authorList>
    </citation>
    <scope>REVIEW</scope>
</reference>
<reference key="6">
    <citation type="journal article" date="2005" name="Biol. Pharm. Bull.">
        <title>Sialobiology of influenza: molecular mechanism of host range variation of influenza viruses.</title>
        <authorList>
            <person name="Suzuki Y."/>
        </authorList>
    </citation>
    <scope>REVIEW</scope>
</reference>
<comment type="function">
    <text evidence="1">Catalyzes the removal of terminal sialic acid residues from viral and cellular glycoconjugates. Cleaves off the terminal sialic acids on the glycosylated HA during virus budding to facilitate virus release. Additionally helps virus spread through the circulation by further removing sialic acids from the cell surface. These cleavages prevent self-aggregation and ensure the efficient spread of the progeny virus from cell to cell. Otherwise, infection would be limited to one round of replication. Described as a receptor-destroying enzyme because it cleaves a terminal sialic acid from the cellular receptors. May facilitate viral invasion of the upper airways by cleaving the sialic acid moieties on the mucin of the airway epithelial cells. Likely to plays a role in the budding process through its association with lipid rafts during intracellular transport. May additionally display a raft-association independent effect on budding. Plays a role in the determination of host range restriction on replication and virulence. Sialidase activity in late endosome/lysosome traffic seems to enhance virus replication.</text>
</comment>
<comment type="catalytic activity">
    <reaction evidence="1">
        <text>Hydrolysis of alpha-(2-&gt;3)-, alpha-(2-&gt;6)-, alpha-(2-&gt;8)- glycosidic linkages of terminal sialic acid residues in oligosaccharides, glycoproteins, glycolipids, colominic acid and synthetic substrates.</text>
        <dbReference type="EC" id="3.2.1.18"/>
    </reaction>
</comment>
<comment type="cofactor">
    <cofactor evidence="1">
        <name>Ca(2+)</name>
        <dbReference type="ChEBI" id="CHEBI:29108"/>
    </cofactor>
</comment>
<comment type="activity regulation">
    <text evidence="1">Inhibited by the neuraminidase inhibitors zanamivir (Relenza) and oseltamivir (Tamiflu). These drugs interfere with the release of progeny virus from infected cells and are effective against all influenza strains. Resistance to neuraminidase inhibitors is quite rare.</text>
</comment>
<comment type="subunit">
    <text evidence="1">Homotetramer.</text>
</comment>
<comment type="subcellular location">
    <subcellularLocation>
        <location evidence="1">Virion membrane</location>
    </subcellularLocation>
    <subcellularLocation>
        <location evidence="1">Host apical cell membrane</location>
        <topology evidence="1">Single-pass type II membrane protein</topology>
    </subcellularLocation>
    <text evidence="1">Preferentially accumulates at the apical plasma membrane in infected polarized epithelial cells, which is the virus assembly site. Uses lipid rafts for cell surface transport and apical sorting. In the virion, forms a mushroom-shaped spike on the surface of the membrane.</text>
</comment>
<comment type="domain">
    <text evidence="1">Intact N-terminus is essential for virion morphogenesis. Possesses two apical sorting signals, one in the ectodomain, which is likely to be a glycan, and the other in the transmembrane domain. The transmembrane domain also plays a role in lipid raft association.</text>
</comment>
<comment type="PTM">
    <text evidence="1">N-glycosylated.</text>
</comment>
<comment type="miscellaneous">
    <text>The influenza A genome consist of 8 RNA segments. Genetic variation of hemagglutinin and/or neuraminidase genes results in the emergence of new influenza strains. The mechanism of variation can be the result of point mutations or the result of genetic reassortment between segments of two different strains.</text>
</comment>
<comment type="similarity">
    <text evidence="1">Belongs to the glycosyl hydrolase 34 family.</text>
</comment>
<organismHost>
    <name type="scientific">Aves</name>
    <dbReference type="NCBI Taxonomy" id="8782"/>
</organismHost>
<dbReference type="EC" id="3.2.1.18" evidence="1"/>
<dbReference type="EMBL" id="AJ574907">
    <property type="protein sequence ID" value="CAE00569.1"/>
    <property type="molecule type" value="Genomic_RNA"/>
</dbReference>
<dbReference type="EMBL" id="DQ067439">
    <property type="protein sequence ID" value="AAY52603.1"/>
    <property type="molecule type" value="Genomic_RNA"/>
</dbReference>
<dbReference type="EMBL" id="CY014665">
    <property type="protein sequence ID" value="ABI84526.1"/>
    <property type="molecule type" value="Genomic_RNA"/>
</dbReference>
<dbReference type="SMR" id="Q0A456"/>
<dbReference type="CAZy" id="GH34">
    <property type="family name" value="Glycoside Hydrolase Family 34"/>
</dbReference>
<dbReference type="GlyCosmos" id="Q0A456">
    <property type="glycosylation" value="7 sites, No reported glycans"/>
</dbReference>
<dbReference type="PRO" id="PR:Q0A456"/>
<dbReference type="Proteomes" id="UP000115522">
    <property type="component" value="Genome"/>
</dbReference>
<dbReference type="GO" id="GO:0020002">
    <property type="term" value="C:host cell plasma membrane"/>
    <property type="evidence" value="ECO:0007669"/>
    <property type="project" value="UniProtKB-SubCell"/>
</dbReference>
<dbReference type="GO" id="GO:0016020">
    <property type="term" value="C:membrane"/>
    <property type="evidence" value="ECO:0007669"/>
    <property type="project" value="UniProtKB-UniRule"/>
</dbReference>
<dbReference type="GO" id="GO:0055036">
    <property type="term" value="C:virion membrane"/>
    <property type="evidence" value="ECO:0007669"/>
    <property type="project" value="UniProtKB-SubCell"/>
</dbReference>
<dbReference type="GO" id="GO:0004308">
    <property type="term" value="F:exo-alpha-sialidase activity"/>
    <property type="evidence" value="ECO:0007669"/>
    <property type="project" value="UniProtKB-UniRule"/>
</dbReference>
<dbReference type="GO" id="GO:0046872">
    <property type="term" value="F:metal ion binding"/>
    <property type="evidence" value="ECO:0007669"/>
    <property type="project" value="UniProtKB-UniRule"/>
</dbReference>
<dbReference type="GO" id="GO:0005975">
    <property type="term" value="P:carbohydrate metabolic process"/>
    <property type="evidence" value="ECO:0007669"/>
    <property type="project" value="InterPro"/>
</dbReference>
<dbReference type="GO" id="GO:0006955">
    <property type="term" value="P:immune response"/>
    <property type="evidence" value="ECO:0000314"/>
    <property type="project" value="BHF-UCL"/>
</dbReference>
<dbReference type="GO" id="GO:0046761">
    <property type="term" value="P:viral budding from plasma membrane"/>
    <property type="evidence" value="ECO:0007669"/>
    <property type="project" value="UniProtKB-UniRule"/>
</dbReference>
<dbReference type="CDD" id="cd15483">
    <property type="entry name" value="Influenza_NA"/>
    <property type="match status" value="1"/>
</dbReference>
<dbReference type="Gene3D" id="2.120.10.10">
    <property type="match status" value="1"/>
</dbReference>
<dbReference type="HAMAP" id="MF_04071">
    <property type="entry name" value="INFV_NRAM"/>
    <property type="match status" value="1"/>
</dbReference>
<dbReference type="InterPro" id="IPR001860">
    <property type="entry name" value="Glyco_hydro_34"/>
</dbReference>
<dbReference type="InterPro" id="IPR033654">
    <property type="entry name" value="Sialidase_Influenza_A/B"/>
</dbReference>
<dbReference type="InterPro" id="IPR036278">
    <property type="entry name" value="Sialidase_sf"/>
</dbReference>
<dbReference type="Pfam" id="PF00064">
    <property type="entry name" value="Neur"/>
    <property type="match status" value="1"/>
</dbReference>
<dbReference type="SUPFAM" id="SSF50939">
    <property type="entry name" value="Sialidases"/>
    <property type="match status" value="1"/>
</dbReference>
<feature type="chain" id="PRO_0000280154" description="Neuraminidase">
    <location>
        <begin position="1"/>
        <end position="469"/>
    </location>
</feature>
<feature type="topological domain" description="Intravirion" evidence="1">
    <location>
        <begin position="1"/>
        <end position="6"/>
    </location>
</feature>
<feature type="transmembrane region" description="Helical" evidence="1">
    <location>
        <begin position="7"/>
        <end position="29"/>
    </location>
</feature>
<feature type="topological domain" description="Virion surface" evidence="1">
    <location>
        <begin position="30"/>
        <end position="469"/>
    </location>
</feature>
<feature type="region of interest" description="Involved in apical transport and lipid raft association" evidence="1">
    <location>
        <begin position="11"/>
        <end position="33"/>
    </location>
</feature>
<feature type="region of interest" description="Hypervariable stalk region" evidence="1">
    <location>
        <begin position="36"/>
        <end position="88"/>
    </location>
</feature>
<feature type="region of interest" description="Head of neuraminidase" evidence="1">
    <location>
        <begin position="91"/>
        <end position="469"/>
    </location>
</feature>
<feature type="region of interest" description="Disordered" evidence="2">
    <location>
        <begin position="324"/>
        <end position="349"/>
    </location>
</feature>
<feature type="active site" description="Proton donor/acceptor" evidence="1">
    <location>
        <position position="151"/>
    </location>
</feature>
<feature type="active site" description="Nucleophile" evidence="1">
    <location>
        <position position="406"/>
    </location>
</feature>
<feature type="binding site" evidence="1">
    <location>
        <position position="118"/>
    </location>
    <ligand>
        <name>substrate</name>
    </ligand>
</feature>
<feature type="binding site" evidence="1">
    <location>
        <position position="152"/>
    </location>
    <ligand>
        <name>substrate</name>
    </ligand>
</feature>
<feature type="binding site" evidence="1">
    <location>
        <begin position="276"/>
        <end position="277"/>
    </location>
    <ligand>
        <name>substrate</name>
    </ligand>
</feature>
<feature type="binding site" evidence="1">
    <location>
        <position position="292"/>
    </location>
    <ligand>
        <name>substrate</name>
    </ligand>
</feature>
<feature type="binding site" evidence="1">
    <location>
        <position position="293"/>
    </location>
    <ligand>
        <name>Ca(2+)</name>
        <dbReference type="ChEBI" id="CHEBI:29108"/>
    </ligand>
</feature>
<feature type="binding site" evidence="1">
    <location>
        <position position="297"/>
    </location>
    <ligand>
        <name>Ca(2+)</name>
        <dbReference type="ChEBI" id="CHEBI:29108"/>
    </ligand>
</feature>
<feature type="binding site" evidence="1">
    <location>
        <position position="324"/>
    </location>
    <ligand>
        <name>Ca(2+)</name>
        <dbReference type="ChEBI" id="CHEBI:29108"/>
    </ligand>
</feature>
<feature type="binding site" evidence="1">
    <location>
        <position position="371"/>
    </location>
    <ligand>
        <name>substrate</name>
    </ligand>
</feature>
<feature type="glycosylation site" description="N-linked (GlcNAc...) asparagine; by host" evidence="1">
    <location>
        <position position="61"/>
    </location>
</feature>
<feature type="glycosylation site" description="N-linked (GlcNAc...) asparagine; by host" evidence="1">
    <location>
        <position position="70"/>
    </location>
</feature>
<feature type="glycosylation site" description="N-linked (GlcNAc...) asparagine; by host" evidence="1">
    <location>
        <position position="86"/>
    </location>
</feature>
<feature type="glycosylation site" description="N-linked (GlcNAc...) asparagine; by host" evidence="1">
    <location>
        <position position="146"/>
    </location>
</feature>
<feature type="glycosylation site" description="N-linked (GlcNAc...) asparagine; by host" evidence="1">
    <location>
        <position position="200"/>
    </location>
</feature>
<feature type="glycosylation site" description="N-linked (GlcNAc...) asparagine; by host" evidence="1">
    <location>
        <position position="234"/>
    </location>
</feature>
<feature type="glycosylation site" description="N-linked (GlcNAc...) asparagine; by host" evidence="1">
    <location>
        <position position="402"/>
    </location>
</feature>
<feature type="disulfide bond" evidence="1">
    <location>
        <begin position="92"/>
        <end position="417"/>
    </location>
</feature>
<feature type="disulfide bond" evidence="1">
    <location>
        <begin position="124"/>
        <end position="129"/>
    </location>
</feature>
<feature type="disulfide bond" evidence="1">
    <location>
        <begin position="183"/>
        <end position="230"/>
    </location>
</feature>
<feature type="disulfide bond" evidence="1">
    <location>
        <begin position="232"/>
        <end position="237"/>
    </location>
</feature>
<feature type="disulfide bond" evidence="1">
    <location>
        <begin position="278"/>
        <end position="291"/>
    </location>
</feature>
<feature type="disulfide bond" evidence="1">
    <location>
        <begin position="280"/>
        <end position="289"/>
    </location>
</feature>
<feature type="disulfide bond" evidence="1">
    <location>
        <begin position="318"/>
        <end position="337"/>
    </location>
</feature>
<feature type="disulfide bond" evidence="1">
    <location>
        <begin position="421"/>
        <end position="447"/>
    </location>
</feature>
<feature type="sequence conflict" description="In Ref. 2; AAY52603." ref="2">
    <original>V</original>
    <variation>M</variation>
    <location>
        <position position="33"/>
    </location>
</feature>
<feature type="sequence conflict" description="In Ref. 2; AAY52603." ref="2">
    <original>C</original>
    <variation>R</variation>
    <location>
        <position position="193"/>
    </location>
</feature>
<feature type="sequence conflict" description="In Ref. 2; AAY52603." ref="2">
    <original>L</original>
    <variation>P</variation>
    <location>
        <position position="211"/>
    </location>
</feature>
<feature type="sequence conflict" description="In Ref. 2; AAY52603." ref="2">
    <original>C</original>
    <variation>G</variation>
    <location>
        <position position="232"/>
    </location>
</feature>
<feature type="sequence conflict" description="In Ref. 2; AAY52603." ref="2">
    <original>CT</original>
    <variation>GP</variation>
    <location>
        <begin position="237"/>
        <end position="238"/>
    </location>
</feature>
<feature type="sequence conflict" description="In Ref. 2; AAY52603." ref="2">
    <original>GS</original>
    <variation>EG</variation>
    <location>
        <begin position="244"/>
        <end position="245"/>
    </location>
</feature>
<feature type="sequence conflict" description="In Ref. 2; AAY52603." ref="2">
    <original>I</original>
    <variation>N</variation>
    <location>
        <position position="257"/>
    </location>
</feature>
<evidence type="ECO:0000255" key="1">
    <source>
        <dbReference type="HAMAP-Rule" id="MF_04071"/>
    </source>
</evidence>
<evidence type="ECO:0000256" key="2">
    <source>
        <dbReference type="SAM" id="MobiDB-lite"/>
    </source>
</evidence>
<name>NRAM_I66A1</name>